<accession>A4T7U4</accession>
<proteinExistence type="inferred from homology"/>
<organism>
    <name type="scientific">Mycolicibacterium gilvum (strain PYR-GCK)</name>
    <name type="common">Mycobacterium gilvum (strain PYR-GCK)</name>
    <dbReference type="NCBI Taxonomy" id="350054"/>
    <lineage>
        <taxon>Bacteria</taxon>
        <taxon>Bacillati</taxon>
        <taxon>Actinomycetota</taxon>
        <taxon>Actinomycetes</taxon>
        <taxon>Mycobacteriales</taxon>
        <taxon>Mycobacteriaceae</taxon>
        <taxon>Mycolicibacterium</taxon>
    </lineage>
</organism>
<comment type="catalytic activity">
    <reaction evidence="1">
        <text>(S)-4-hydroxy-2-oxopentanoate = acetaldehyde + pyruvate</text>
        <dbReference type="Rhea" id="RHEA:22624"/>
        <dbReference type="ChEBI" id="CHEBI:15343"/>
        <dbReference type="ChEBI" id="CHEBI:15361"/>
        <dbReference type="ChEBI" id="CHEBI:73143"/>
        <dbReference type="EC" id="4.1.3.39"/>
    </reaction>
</comment>
<comment type="similarity">
    <text evidence="1">Belongs to the 4-hydroxy-2-oxovalerate aldolase family.</text>
</comment>
<name>HOA_MYCGI</name>
<protein>
    <recommendedName>
        <fullName evidence="1">4-hydroxy-2-oxovalerate aldolase</fullName>
        <shortName evidence="1">HOA</shortName>
        <ecNumber evidence="1">4.1.3.39</ecNumber>
    </recommendedName>
    <alternativeName>
        <fullName evidence="1">4-hydroxy-2-keto-pentanoic acid aldolase</fullName>
    </alternativeName>
    <alternativeName>
        <fullName evidence="1">4-hydroxy-2-oxopentanoate aldolase</fullName>
    </alternativeName>
</protein>
<evidence type="ECO:0000255" key="1">
    <source>
        <dbReference type="HAMAP-Rule" id="MF_01656"/>
    </source>
</evidence>
<dbReference type="EC" id="4.1.3.39" evidence="1"/>
<dbReference type="EMBL" id="CP000656">
    <property type="protein sequence ID" value="ABP44004.1"/>
    <property type="molecule type" value="Genomic_DNA"/>
</dbReference>
<dbReference type="SMR" id="A4T7U4"/>
<dbReference type="STRING" id="350054.Mflv_1522"/>
<dbReference type="KEGG" id="mgi:Mflv_1522"/>
<dbReference type="eggNOG" id="COG0119">
    <property type="taxonomic scope" value="Bacteria"/>
</dbReference>
<dbReference type="HOGENOM" id="CLU_049173_0_0_11"/>
<dbReference type="OrthoDB" id="9803573at2"/>
<dbReference type="GO" id="GO:0003852">
    <property type="term" value="F:2-isopropylmalate synthase activity"/>
    <property type="evidence" value="ECO:0007669"/>
    <property type="project" value="TreeGrafter"/>
</dbReference>
<dbReference type="GO" id="GO:0008701">
    <property type="term" value="F:4-hydroxy-2-oxovalerate aldolase activity"/>
    <property type="evidence" value="ECO:0007669"/>
    <property type="project" value="UniProtKB-UniRule"/>
</dbReference>
<dbReference type="GO" id="GO:0030145">
    <property type="term" value="F:manganese ion binding"/>
    <property type="evidence" value="ECO:0007669"/>
    <property type="project" value="UniProtKB-UniRule"/>
</dbReference>
<dbReference type="GO" id="GO:0009056">
    <property type="term" value="P:catabolic process"/>
    <property type="evidence" value="ECO:0007669"/>
    <property type="project" value="UniProtKB-KW"/>
</dbReference>
<dbReference type="GO" id="GO:0009098">
    <property type="term" value="P:L-leucine biosynthetic process"/>
    <property type="evidence" value="ECO:0007669"/>
    <property type="project" value="TreeGrafter"/>
</dbReference>
<dbReference type="CDD" id="cd07943">
    <property type="entry name" value="DRE_TIM_HOA"/>
    <property type="match status" value="1"/>
</dbReference>
<dbReference type="FunFam" id="3.20.20.70:FF:000072">
    <property type="entry name" value="4-hydroxy-2-oxovalerate aldolase"/>
    <property type="match status" value="1"/>
</dbReference>
<dbReference type="Gene3D" id="1.10.8.60">
    <property type="match status" value="1"/>
</dbReference>
<dbReference type="Gene3D" id="3.20.20.70">
    <property type="entry name" value="Aldolase class I"/>
    <property type="match status" value="1"/>
</dbReference>
<dbReference type="HAMAP" id="MF_01656">
    <property type="entry name" value="HOA"/>
    <property type="match status" value="1"/>
</dbReference>
<dbReference type="InterPro" id="IPR050073">
    <property type="entry name" value="2-IPM_HCS-like"/>
</dbReference>
<dbReference type="InterPro" id="IPR017629">
    <property type="entry name" value="4OH_2_O-val_aldolase"/>
</dbReference>
<dbReference type="InterPro" id="IPR013785">
    <property type="entry name" value="Aldolase_TIM"/>
</dbReference>
<dbReference type="InterPro" id="IPR012425">
    <property type="entry name" value="DmpG_comm"/>
</dbReference>
<dbReference type="InterPro" id="IPR035685">
    <property type="entry name" value="DRE_TIM_HOA"/>
</dbReference>
<dbReference type="InterPro" id="IPR000891">
    <property type="entry name" value="PYR_CT"/>
</dbReference>
<dbReference type="NCBIfam" id="TIGR03217">
    <property type="entry name" value="4OH_2_O_val_ald"/>
    <property type="match status" value="1"/>
</dbReference>
<dbReference type="NCBIfam" id="NF006049">
    <property type="entry name" value="PRK08195.1"/>
    <property type="match status" value="1"/>
</dbReference>
<dbReference type="PANTHER" id="PTHR10277:SF9">
    <property type="entry name" value="2-ISOPROPYLMALATE SYNTHASE 1, CHLOROPLASTIC-RELATED"/>
    <property type="match status" value="1"/>
</dbReference>
<dbReference type="PANTHER" id="PTHR10277">
    <property type="entry name" value="HOMOCITRATE SYNTHASE-RELATED"/>
    <property type="match status" value="1"/>
</dbReference>
<dbReference type="Pfam" id="PF07836">
    <property type="entry name" value="DmpG_comm"/>
    <property type="match status" value="1"/>
</dbReference>
<dbReference type="Pfam" id="PF00682">
    <property type="entry name" value="HMGL-like"/>
    <property type="match status" value="1"/>
</dbReference>
<dbReference type="SUPFAM" id="SSF51569">
    <property type="entry name" value="Aldolase"/>
    <property type="match status" value="1"/>
</dbReference>
<dbReference type="SUPFAM" id="SSF89000">
    <property type="entry name" value="post-HMGL domain-like"/>
    <property type="match status" value="1"/>
</dbReference>
<dbReference type="PROSITE" id="PS50991">
    <property type="entry name" value="PYR_CT"/>
    <property type="match status" value="1"/>
</dbReference>
<sequence>MSTEDIYFNPIWDVRMTDTSLRDGSHHKRHQFTKDEVGSIVAALDAAGVPVIEVTHGDGLGGSSFNYGFSKTPEQELIKLAAETAKESKIAFLMLPGVGTKEDIKEAQNNGGSICRIATHCTEADVSIQHFGLARELGLETVGFLMMSHTISPEKLAKQARIMADAGCQCVYVVDSAGALVLEGVADRVSALVAELGDDAQVGFHGHENLGLGVANSIEAVRAGAKQIDGSCRRFGAGAGNAPVEALIGVFDKIGVKTGIDFFDIADAAEEVVAPAMPAECLLDRNALIMGYSGVYSSFLKHAIRQSERYGVPAHQLLHRAGQRKLIGGQEDQLIDIALEIKREQEAEATRA</sequence>
<reference key="1">
    <citation type="submission" date="2007-04" db="EMBL/GenBank/DDBJ databases">
        <title>Complete sequence of chromosome of Mycobacterium gilvum PYR-GCK.</title>
        <authorList>
            <consortium name="US DOE Joint Genome Institute"/>
            <person name="Copeland A."/>
            <person name="Lucas S."/>
            <person name="Lapidus A."/>
            <person name="Barry K."/>
            <person name="Detter J.C."/>
            <person name="Glavina del Rio T."/>
            <person name="Hammon N."/>
            <person name="Israni S."/>
            <person name="Dalin E."/>
            <person name="Tice H."/>
            <person name="Pitluck S."/>
            <person name="Chain P."/>
            <person name="Malfatti S."/>
            <person name="Shin M."/>
            <person name="Vergez L."/>
            <person name="Schmutz J."/>
            <person name="Larimer F."/>
            <person name="Land M."/>
            <person name="Hauser L."/>
            <person name="Kyrpides N."/>
            <person name="Mikhailova N."/>
            <person name="Miller C."/>
            <person name="Richardson P."/>
        </authorList>
    </citation>
    <scope>NUCLEOTIDE SEQUENCE [LARGE SCALE GENOMIC DNA]</scope>
    <source>
        <strain>PYR-GCK</strain>
    </source>
</reference>
<gene>
    <name type="ordered locus">Mflv_1522</name>
</gene>
<feature type="chain" id="PRO_0000387850" description="4-hydroxy-2-oxovalerate aldolase">
    <location>
        <begin position="1"/>
        <end position="352"/>
    </location>
</feature>
<feature type="domain" description="Pyruvate carboxyltransferase" evidence="1">
    <location>
        <begin position="14"/>
        <end position="266"/>
    </location>
</feature>
<feature type="active site" description="Proton acceptor" evidence="1">
    <location>
        <position position="26"/>
    </location>
</feature>
<feature type="binding site" evidence="1">
    <location>
        <begin position="22"/>
        <end position="23"/>
    </location>
    <ligand>
        <name>substrate</name>
    </ligand>
</feature>
<feature type="binding site" evidence="1">
    <location>
        <position position="23"/>
    </location>
    <ligand>
        <name>Mn(2+)</name>
        <dbReference type="ChEBI" id="CHEBI:29035"/>
    </ligand>
</feature>
<feature type="binding site" evidence="1">
    <location>
        <position position="176"/>
    </location>
    <ligand>
        <name>substrate</name>
    </ligand>
</feature>
<feature type="binding site" evidence="1">
    <location>
        <position position="205"/>
    </location>
    <ligand>
        <name>Mn(2+)</name>
        <dbReference type="ChEBI" id="CHEBI:29035"/>
    </ligand>
</feature>
<feature type="binding site" evidence="1">
    <location>
        <position position="205"/>
    </location>
    <ligand>
        <name>substrate</name>
    </ligand>
</feature>
<feature type="binding site" evidence="1">
    <location>
        <position position="207"/>
    </location>
    <ligand>
        <name>Mn(2+)</name>
        <dbReference type="ChEBI" id="CHEBI:29035"/>
    </ligand>
</feature>
<feature type="binding site" evidence="1">
    <location>
        <position position="296"/>
    </location>
    <ligand>
        <name>substrate</name>
    </ligand>
</feature>
<feature type="site" description="Transition state stabilizer" evidence="1">
    <location>
        <position position="22"/>
    </location>
</feature>
<keyword id="KW-0058">Aromatic hydrocarbons catabolism</keyword>
<keyword id="KW-0456">Lyase</keyword>
<keyword id="KW-0464">Manganese</keyword>
<keyword id="KW-0479">Metal-binding</keyword>